<evidence type="ECO:0000250" key="1"/>
<evidence type="ECO:0000250" key="2">
    <source>
        <dbReference type="UniProtKB" id="P17563"/>
    </source>
</evidence>
<evidence type="ECO:0000250" key="3">
    <source>
        <dbReference type="UniProtKB" id="Q13228"/>
    </source>
</evidence>
<evidence type="ECO:0000250" key="4">
    <source>
        <dbReference type="UniProtKB" id="Q8VIF7"/>
    </source>
</evidence>
<evidence type="ECO:0000305" key="5"/>
<gene>
    <name type="primary">SELENBP1</name>
    <name type="synonym">SBP</name>
</gene>
<sequence>MATKCGNCGPGYSTPLEAMKGPREEIVYLPCIYRNTGTEAPDYLATVDVDPKSPQYCQVIHRLPMPNLKDELHHSGWNTCSSCFGDSTKSRTKLVLPSLISSRIYVVDVGSEPRALKLHKVIEPKDIHAKCELAFLHTSHCLASGEVMISSLGDVKGNGKGGFVLLDAETFEVKGTWERRGGAAPLGYDFWYQPRHNVMISTEWAAPNVLRDGFNPADVEAGLYGSHLYVWDWQRHEIVQTLSLKDGLIPLEIRFLHNPDAAQGFVGCALSSTIQRFYKNEGGTWSVEKVIQVPPKKVKGWLLPEMPGLITDILLSLDDRFLYFSNWLHGDLRQYDISDPQRPRLTGQLFVGGSIVKGGPVQVLEDQELKSQPEPLVVKGKRVAGGPQMIQLSLDGKRLYVTTSLYSAWDKQFYPDLIREGSVMLQVDVDTVKGGLKLNPNFLVDFGKEPLGPALAHELRYPGGDCSSDIWI</sequence>
<keyword id="KW-0007">Acetylation</keyword>
<keyword id="KW-0963">Cytoplasm</keyword>
<keyword id="KW-0472">Membrane</keyword>
<keyword id="KW-0539">Nucleus</keyword>
<keyword id="KW-0560">Oxidoreductase</keyword>
<keyword id="KW-0597">Phosphoprotein</keyword>
<keyword id="KW-0653">Protein transport</keyword>
<keyword id="KW-1185">Reference proteome</keyword>
<keyword id="KW-0711">Selenium</keyword>
<keyword id="KW-0813">Transport</keyword>
<protein>
    <recommendedName>
        <fullName evidence="3">Methanethiol oxidase</fullName>
        <shortName evidence="3">MTO</shortName>
        <ecNumber evidence="3">1.8.3.4</ecNumber>
    </recommendedName>
    <alternativeName>
        <fullName>Selenium-binding protein 1</fullName>
    </alternativeName>
</protein>
<dbReference type="EC" id="1.8.3.4" evidence="3"/>
<dbReference type="EMBL" id="CR857313">
    <property type="protein sequence ID" value="CAH89609.1"/>
    <property type="molecule type" value="mRNA"/>
</dbReference>
<dbReference type="RefSeq" id="NP_001127175.1">
    <property type="nucleotide sequence ID" value="NM_001133703.2"/>
</dbReference>
<dbReference type="SMR" id="Q5RF48"/>
<dbReference type="FunCoup" id="Q5RF48">
    <property type="interactions" value="536"/>
</dbReference>
<dbReference type="STRING" id="9601.ENSPPYP00000001013"/>
<dbReference type="GeneID" id="100174227"/>
<dbReference type="KEGG" id="pon:100174227"/>
<dbReference type="CTD" id="8991"/>
<dbReference type="eggNOG" id="KOG0918">
    <property type="taxonomic scope" value="Eukaryota"/>
</dbReference>
<dbReference type="InParanoid" id="Q5RF48"/>
<dbReference type="OrthoDB" id="10252446at2759"/>
<dbReference type="Proteomes" id="UP000001595">
    <property type="component" value="Unplaced"/>
</dbReference>
<dbReference type="GO" id="GO:0005829">
    <property type="term" value="C:cytosol"/>
    <property type="evidence" value="ECO:0007669"/>
    <property type="project" value="UniProtKB-SubCell"/>
</dbReference>
<dbReference type="GO" id="GO:0016020">
    <property type="term" value="C:membrane"/>
    <property type="evidence" value="ECO:0007669"/>
    <property type="project" value="UniProtKB-SubCell"/>
</dbReference>
<dbReference type="GO" id="GO:0005634">
    <property type="term" value="C:nucleus"/>
    <property type="evidence" value="ECO:0007669"/>
    <property type="project" value="UniProtKB-SubCell"/>
</dbReference>
<dbReference type="GO" id="GO:0018549">
    <property type="term" value="F:methanethiol oxidase activity"/>
    <property type="evidence" value="ECO:0007669"/>
    <property type="project" value="UniProtKB-EC"/>
</dbReference>
<dbReference type="GO" id="GO:0008430">
    <property type="term" value="F:selenium binding"/>
    <property type="evidence" value="ECO:0007669"/>
    <property type="project" value="InterPro"/>
</dbReference>
<dbReference type="GO" id="GO:0015031">
    <property type="term" value="P:protein transport"/>
    <property type="evidence" value="ECO:0007669"/>
    <property type="project" value="UniProtKB-KW"/>
</dbReference>
<dbReference type="InterPro" id="IPR008826">
    <property type="entry name" value="Se-bd"/>
</dbReference>
<dbReference type="PANTHER" id="PTHR23300">
    <property type="entry name" value="METHANETHIOL OXIDASE"/>
    <property type="match status" value="1"/>
</dbReference>
<dbReference type="PANTHER" id="PTHR23300:SF0">
    <property type="entry name" value="METHANETHIOL OXIDASE"/>
    <property type="match status" value="1"/>
</dbReference>
<dbReference type="Pfam" id="PF05694">
    <property type="entry name" value="SBP56"/>
    <property type="match status" value="1"/>
</dbReference>
<dbReference type="SUPFAM" id="SSF75011">
    <property type="entry name" value="3-carboxy-cis,cis-mucoante lactonizing enzyme"/>
    <property type="match status" value="1"/>
</dbReference>
<proteinExistence type="evidence at transcript level"/>
<comment type="function">
    <text evidence="3 4">Catalyzes the oxidation of methanethiol, an organosulfur compound known to be produced in substantial amounts by gut bacteria (By similarity). Selenium-binding protein which may be involved in the sensing of reactive xenobiotics in the cytoplasm. May be involved in intra-Golgi protein transport (By similarity).</text>
</comment>
<comment type="catalytic activity">
    <reaction evidence="3">
        <text>methanethiol + O2 + H2O = hydrogen sulfide + formaldehyde + H2O2 + H(+)</text>
        <dbReference type="Rhea" id="RHEA:11812"/>
        <dbReference type="ChEBI" id="CHEBI:15377"/>
        <dbReference type="ChEBI" id="CHEBI:15378"/>
        <dbReference type="ChEBI" id="CHEBI:15379"/>
        <dbReference type="ChEBI" id="CHEBI:16007"/>
        <dbReference type="ChEBI" id="CHEBI:16240"/>
        <dbReference type="ChEBI" id="CHEBI:16842"/>
        <dbReference type="ChEBI" id="CHEBI:29919"/>
        <dbReference type="EC" id="1.8.3.4"/>
    </reaction>
</comment>
<comment type="pathway">
    <text evidence="3">Organosulfur degradation.</text>
</comment>
<comment type="subunit">
    <text evidence="1">Interacts with USP33.</text>
</comment>
<comment type="subcellular location">
    <subcellularLocation>
        <location evidence="1">Nucleus</location>
    </subcellularLocation>
    <subcellularLocation>
        <location evidence="1">Cytoplasm</location>
        <location evidence="1">Cytosol</location>
    </subcellularLocation>
    <subcellularLocation>
        <location evidence="1">Membrane</location>
        <topology evidence="1">Peripheral membrane protein</topology>
    </subcellularLocation>
    <text evidence="1">May associate with Golgi membrane. May associate with the membrane of autophagosomes (By similarity).</text>
</comment>
<comment type="PTM">
    <text evidence="1">The N-terminus is blocked.</text>
</comment>
<comment type="similarity">
    <text evidence="5">Belongs to the selenium-binding protein family.</text>
</comment>
<reference key="1">
    <citation type="submission" date="2004-11" db="EMBL/GenBank/DDBJ databases">
        <authorList>
            <consortium name="The German cDNA consortium"/>
        </authorList>
    </citation>
    <scope>NUCLEOTIDE SEQUENCE [LARGE SCALE MRNA]</scope>
    <source>
        <tissue>Kidney</tissue>
    </source>
</reference>
<feature type="initiator methionine" description="Removed" evidence="3">
    <location>
        <position position="1"/>
    </location>
</feature>
<feature type="chain" id="PRO_0000289062" description="Methanethiol oxidase">
    <location>
        <begin position="2"/>
        <end position="472"/>
    </location>
</feature>
<feature type="modified residue" description="N-acetylalanine" evidence="3">
    <location>
        <position position="2"/>
    </location>
</feature>
<feature type="modified residue" description="Phosphoserine" evidence="3">
    <location>
        <position position="111"/>
    </location>
</feature>
<feature type="modified residue" description="Phosphoserine" evidence="3">
    <location>
        <position position="371"/>
    </location>
</feature>
<feature type="modified residue" description="Phosphoserine" evidence="2">
    <location>
        <position position="467"/>
    </location>
</feature>
<name>SBP1_PONAB</name>
<organism>
    <name type="scientific">Pongo abelii</name>
    <name type="common">Sumatran orangutan</name>
    <name type="synonym">Pongo pygmaeus abelii</name>
    <dbReference type="NCBI Taxonomy" id="9601"/>
    <lineage>
        <taxon>Eukaryota</taxon>
        <taxon>Metazoa</taxon>
        <taxon>Chordata</taxon>
        <taxon>Craniata</taxon>
        <taxon>Vertebrata</taxon>
        <taxon>Euteleostomi</taxon>
        <taxon>Mammalia</taxon>
        <taxon>Eutheria</taxon>
        <taxon>Euarchontoglires</taxon>
        <taxon>Primates</taxon>
        <taxon>Haplorrhini</taxon>
        <taxon>Catarrhini</taxon>
        <taxon>Hominidae</taxon>
        <taxon>Pongo</taxon>
    </lineage>
</organism>
<accession>Q5RF48</accession>